<comment type="function">
    <text evidence="1">Together with its co-chaperonin GroES, plays an essential role in assisting protein folding. The GroEL-GroES system forms a nano-cage that allows encapsulation of the non-native substrate proteins and provides a physical environment optimized to promote and accelerate protein folding.</text>
</comment>
<comment type="catalytic activity">
    <reaction evidence="1">
        <text>ATP + H2O + a folded polypeptide = ADP + phosphate + an unfolded polypeptide.</text>
        <dbReference type="EC" id="5.6.1.7"/>
    </reaction>
</comment>
<comment type="subunit">
    <text evidence="1">Forms a cylinder of 14 subunits composed of two heptameric rings stacked back-to-back. Interacts with the co-chaperonin GroES.</text>
</comment>
<comment type="subcellular location">
    <subcellularLocation>
        <location evidence="1">Cytoplasm</location>
    </subcellularLocation>
</comment>
<comment type="similarity">
    <text evidence="1">Belongs to the chaperonin (HSP60) family.</text>
</comment>
<reference key="1">
    <citation type="journal article" date="2007" name="Science">
        <title>Legumes symbioses: absence of nod genes in photosynthetic bradyrhizobia.</title>
        <authorList>
            <person name="Giraud E."/>
            <person name="Moulin L."/>
            <person name="Vallenet D."/>
            <person name="Barbe V."/>
            <person name="Cytryn E."/>
            <person name="Avarre J.-C."/>
            <person name="Jaubert M."/>
            <person name="Simon D."/>
            <person name="Cartieaux F."/>
            <person name="Prin Y."/>
            <person name="Bena G."/>
            <person name="Hannibal L."/>
            <person name="Fardoux J."/>
            <person name="Kojadinovic M."/>
            <person name="Vuillet L."/>
            <person name="Lajus A."/>
            <person name="Cruveiller S."/>
            <person name="Rouy Z."/>
            <person name="Mangenot S."/>
            <person name="Segurens B."/>
            <person name="Dossat C."/>
            <person name="Franck W.L."/>
            <person name="Chang W.-S."/>
            <person name="Saunders E."/>
            <person name="Bruce D."/>
            <person name="Richardson P."/>
            <person name="Normand P."/>
            <person name="Dreyfus B."/>
            <person name="Pignol D."/>
            <person name="Stacey G."/>
            <person name="Emerich D."/>
            <person name="Vermeglio A."/>
            <person name="Medigue C."/>
            <person name="Sadowsky M."/>
        </authorList>
    </citation>
    <scope>NUCLEOTIDE SEQUENCE [LARGE SCALE GENOMIC DNA]</scope>
    <source>
        <strain>BTAi1 / ATCC BAA-1182</strain>
    </source>
</reference>
<proteinExistence type="inferred from homology"/>
<organism>
    <name type="scientific">Bradyrhizobium sp. (strain BTAi1 / ATCC BAA-1182)</name>
    <dbReference type="NCBI Taxonomy" id="288000"/>
    <lineage>
        <taxon>Bacteria</taxon>
        <taxon>Pseudomonadati</taxon>
        <taxon>Pseudomonadota</taxon>
        <taxon>Alphaproteobacteria</taxon>
        <taxon>Hyphomicrobiales</taxon>
        <taxon>Nitrobacteraceae</taxon>
        <taxon>Bradyrhizobium</taxon>
    </lineage>
</organism>
<gene>
    <name evidence="1" type="primary">groEL1</name>
    <name evidence="1" type="synonym">groL1</name>
    <name type="ordered locus">BBta_1671</name>
</gene>
<keyword id="KW-0067">ATP-binding</keyword>
<keyword id="KW-0143">Chaperone</keyword>
<keyword id="KW-0963">Cytoplasm</keyword>
<keyword id="KW-0413">Isomerase</keyword>
<keyword id="KW-0547">Nucleotide-binding</keyword>
<keyword id="KW-1185">Reference proteome</keyword>
<dbReference type="EC" id="5.6.1.7" evidence="1"/>
<dbReference type="EMBL" id="CP000494">
    <property type="protein sequence ID" value="ABQ33881.1"/>
    <property type="molecule type" value="Genomic_DNA"/>
</dbReference>
<dbReference type="RefSeq" id="WP_012041914.1">
    <property type="nucleotide sequence ID" value="NC_009485.1"/>
</dbReference>
<dbReference type="SMR" id="A5ECI7"/>
<dbReference type="STRING" id="288000.BBta_1671"/>
<dbReference type="KEGG" id="bbt:BBta_1671"/>
<dbReference type="eggNOG" id="COG0459">
    <property type="taxonomic scope" value="Bacteria"/>
</dbReference>
<dbReference type="HOGENOM" id="CLU_016503_3_0_5"/>
<dbReference type="OrthoDB" id="9766614at2"/>
<dbReference type="Proteomes" id="UP000000246">
    <property type="component" value="Chromosome"/>
</dbReference>
<dbReference type="GO" id="GO:0005737">
    <property type="term" value="C:cytoplasm"/>
    <property type="evidence" value="ECO:0007669"/>
    <property type="project" value="UniProtKB-SubCell"/>
</dbReference>
<dbReference type="GO" id="GO:0005524">
    <property type="term" value="F:ATP binding"/>
    <property type="evidence" value="ECO:0007669"/>
    <property type="project" value="UniProtKB-UniRule"/>
</dbReference>
<dbReference type="GO" id="GO:0140662">
    <property type="term" value="F:ATP-dependent protein folding chaperone"/>
    <property type="evidence" value="ECO:0007669"/>
    <property type="project" value="InterPro"/>
</dbReference>
<dbReference type="GO" id="GO:0016853">
    <property type="term" value="F:isomerase activity"/>
    <property type="evidence" value="ECO:0007669"/>
    <property type="project" value="UniProtKB-KW"/>
</dbReference>
<dbReference type="GO" id="GO:0051082">
    <property type="term" value="F:unfolded protein binding"/>
    <property type="evidence" value="ECO:0007669"/>
    <property type="project" value="UniProtKB-UniRule"/>
</dbReference>
<dbReference type="GO" id="GO:0042026">
    <property type="term" value="P:protein refolding"/>
    <property type="evidence" value="ECO:0007669"/>
    <property type="project" value="UniProtKB-UniRule"/>
</dbReference>
<dbReference type="CDD" id="cd03344">
    <property type="entry name" value="GroEL"/>
    <property type="match status" value="1"/>
</dbReference>
<dbReference type="FunFam" id="1.10.560.10:FF:000001">
    <property type="entry name" value="60 kDa chaperonin"/>
    <property type="match status" value="1"/>
</dbReference>
<dbReference type="FunFam" id="3.50.7.10:FF:000001">
    <property type="entry name" value="60 kDa chaperonin"/>
    <property type="match status" value="1"/>
</dbReference>
<dbReference type="Gene3D" id="3.50.7.10">
    <property type="entry name" value="GroEL"/>
    <property type="match status" value="1"/>
</dbReference>
<dbReference type="Gene3D" id="1.10.560.10">
    <property type="entry name" value="GroEL-like equatorial domain"/>
    <property type="match status" value="1"/>
</dbReference>
<dbReference type="Gene3D" id="3.30.260.10">
    <property type="entry name" value="TCP-1-like chaperonin intermediate domain"/>
    <property type="match status" value="1"/>
</dbReference>
<dbReference type="HAMAP" id="MF_00600">
    <property type="entry name" value="CH60"/>
    <property type="match status" value="1"/>
</dbReference>
<dbReference type="InterPro" id="IPR018370">
    <property type="entry name" value="Chaperonin_Cpn60_CS"/>
</dbReference>
<dbReference type="InterPro" id="IPR001844">
    <property type="entry name" value="Cpn60/GroEL"/>
</dbReference>
<dbReference type="InterPro" id="IPR002423">
    <property type="entry name" value="Cpn60/GroEL/TCP-1"/>
</dbReference>
<dbReference type="InterPro" id="IPR027409">
    <property type="entry name" value="GroEL-like_apical_dom_sf"/>
</dbReference>
<dbReference type="InterPro" id="IPR027413">
    <property type="entry name" value="GROEL-like_equatorial_sf"/>
</dbReference>
<dbReference type="InterPro" id="IPR027410">
    <property type="entry name" value="TCP-1-like_intermed_sf"/>
</dbReference>
<dbReference type="NCBIfam" id="TIGR02348">
    <property type="entry name" value="GroEL"/>
    <property type="match status" value="1"/>
</dbReference>
<dbReference type="NCBIfam" id="NF000592">
    <property type="entry name" value="PRK00013.1"/>
    <property type="match status" value="1"/>
</dbReference>
<dbReference type="NCBIfam" id="NF009487">
    <property type="entry name" value="PRK12849.1"/>
    <property type="match status" value="1"/>
</dbReference>
<dbReference type="NCBIfam" id="NF009488">
    <property type="entry name" value="PRK12850.1"/>
    <property type="match status" value="1"/>
</dbReference>
<dbReference type="NCBIfam" id="NF009489">
    <property type="entry name" value="PRK12851.1"/>
    <property type="match status" value="1"/>
</dbReference>
<dbReference type="PANTHER" id="PTHR45633">
    <property type="entry name" value="60 KDA HEAT SHOCK PROTEIN, MITOCHONDRIAL"/>
    <property type="match status" value="1"/>
</dbReference>
<dbReference type="Pfam" id="PF00118">
    <property type="entry name" value="Cpn60_TCP1"/>
    <property type="match status" value="1"/>
</dbReference>
<dbReference type="PRINTS" id="PR00298">
    <property type="entry name" value="CHAPERONIN60"/>
</dbReference>
<dbReference type="SUPFAM" id="SSF52029">
    <property type="entry name" value="GroEL apical domain-like"/>
    <property type="match status" value="1"/>
</dbReference>
<dbReference type="SUPFAM" id="SSF48592">
    <property type="entry name" value="GroEL equatorial domain-like"/>
    <property type="match status" value="1"/>
</dbReference>
<dbReference type="SUPFAM" id="SSF54849">
    <property type="entry name" value="GroEL-intermediate domain like"/>
    <property type="match status" value="1"/>
</dbReference>
<dbReference type="PROSITE" id="PS00296">
    <property type="entry name" value="CHAPERONINS_CPN60"/>
    <property type="match status" value="1"/>
</dbReference>
<protein>
    <recommendedName>
        <fullName evidence="1">Chaperonin GroEL 1</fullName>
        <ecNumber evidence="1">5.6.1.7</ecNumber>
    </recommendedName>
    <alternativeName>
        <fullName evidence="1">60 kDa chaperonin 1</fullName>
    </alternativeName>
    <alternativeName>
        <fullName evidence="1">Chaperonin-60 1</fullName>
        <shortName evidence="1">Cpn60 1</shortName>
    </alternativeName>
</protein>
<sequence length="547" mass="57472">MAAKDVKFAGDARDRMLRGVDILANAVKVTLGPKGRNVVIEKSFGAPRITKDGVTVAKEIELEDKFENMGAQMLREVASKTNDLAGDGTTTATVLAQAIVREGAKAVAAGMNPMDLKRGIDTAVAAVIKDIEKRAKPVASSAEVAQVGTISANGDAAIGKMIAQAMQKVGNEGVITVEENKSLETEVDIVEGMKFDRGYLSPYFVTNAEKMTAELDDVYVLLHEKKLSGLQAMLPVLEAVVQSGRPLLIIAEDVEGEALATLVVNRLRGGLKVAAVKAPGFGDRRKAMLEDIAILTGGQLISDDLGMKLENVTIKMLGRAKKVVIDKENTTIVNGAGKKADIEARVGQIKAQIEETTSDYDREKLQERLAKLAGGVAVIRVGGATEIEVKEKKDRVEDALNATRAAVQEGIVPGGGVALLRAKKAVGRITNPNSDVQAGINIVLKALEAPVRQIAENAGVEGSLVVGKILEEKSETFGFDAQSEDYVDMVAKGIIDPAKVVRTALQDASSVAGLLVTTEAMVAELPKEAAPAMPAGGGMGGMGGMGF</sequence>
<evidence type="ECO:0000255" key="1">
    <source>
        <dbReference type="HAMAP-Rule" id="MF_00600"/>
    </source>
</evidence>
<name>CH601_BRASB</name>
<feature type="chain" id="PRO_0000331974" description="Chaperonin GroEL 1">
    <location>
        <begin position="1"/>
        <end position="547"/>
    </location>
</feature>
<feature type="binding site" evidence="1">
    <location>
        <begin position="30"/>
        <end position="33"/>
    </location>
    <ligand>
        <name>ATP</name>
        <dbReference type="ChEBI" id="CHEBI:30616"/>
    </ligand>
</feature>
<feature type="binding site" evidence="1">
    <location>
        <position position="51"/>
    </location>
    <ligand>
        <name>ATP</name>
        <dbReference type="ChEBI" id="CHEBI:30616"/>
    </ligand>
</feature>
<feature type="binding site" evidence="1">
    <location>
        <begin position="87"/>
        <end position="91"/>
    </location>
    <ligand>
        <name>ATP</name>
        <dbReference type="ChEBI" id="CHEBI:30616"/>
    </ligand>
</feature>
<feature type="binding site" evidence="1">
    <location>
        <position position="415"/>
    </location>
    <ligand>
        <name>ATP</name>
        <dbReference type="ChEBI" id="CHEBI:30616"/>
    </ligand>
</feature>
<feature type="binding site" evidence="1">
    <location>
        <position position="496"/>
    </location>
    <ligand>
        <name>ATP</name>
        <dbReference type="ChEBI" id="CHEBI:30616"/>
    </ligand>
</feature>
<accession>A5ECI7</accession>